<organism>
    <name type="scientific">Oryza sativa subsp. japonica</name>
    <name type="common">Rice</name>
    <dbReference type="NCBI Taxonomy" id="39947"/>
    <lineage>
        <taxon>Eukaryota</taxon>
        <taxon>Viridiplantae</taxon>
        <taxon>Streptophyta</taxon>
        <taxon>Embryophyta</taxon>
        <taxon>Tracheophyta</taxon>
        <taxon>Spermatophyta</taxon>
        <taxon>Magnoliopsida</taxon>
        <taxon>Liliopsida</taxon>
        <taxon>Poales</taxon>
        <taxon>Poaceae</taxon>
        <taxon>BOP clade</taxon>
        <taxon>Oryzoideae</taxon>
        <taxon>Oryzeae</taxon>
        <taxon>Oryzinae</taxon>
        <taxon>Oryza</taxon>
        <taxon>Oryza sativa</taxon>
    </lineage>
</organism>
<name>LOX2_ORYSJ</name>
<protein>
    <recommendedName>
        <fullName>Linoleate 9S-lipoxygenase 2</fullName>
        <ecNumber>1.13.11.58</ecNumber>
    </recommendedName>
    <alternativeName>
        <fullName>Lipoxygenase 2</fullName>
    </alternativeName>
    <alternativeName>
        <fullName>Lipoxygenase L-2</fullName>
    </alternativeName>
</protein>
<gene>
    <name type="primary">LOX1.1</name>
    <name type="ordered locus">Os03g0738600</name>
    <name type="ordered locus">LOC_Os03g52860</name>
    <name evidence="7" type="ORF">OsJ_12500</name>
    <name type="ORF">OSJNBa0057G07.15</name>
</gene>
<keyword id="KW-0963">Cytoplasm</keyword>
<keyword id="KW-0223">Dioxygenase</keyword>
<keyword id="KW-0275">Fatty acid biosynthesis</keyword>
<keyword id="KW-0276">Fatty acid metabolism</keyword>
<keyword id="KW-0408">Iron</keyword>
<keyword id="KW-0444">Lipid biosynthesis</keyword>
<keyword id="KW-0443">Lipid metabolism</keyword>
<keyword id="KW-0479">Metal-binding</keyword>
<keyword id="KW-0560">Oxidoreductase</keyword>
<keyword id="KW-0925">Oxylipin biosynthesis</keyword>
<keyword id="KW-1185">Reference proteome</keyword>
<dbReference type="EC" id="1.13.11.58"/>
<dbReference type="EMBL" id="X64396">
    <property type="protein sequence ID" value="CAA45738.1"/>
    <property type="molecule type" value="mRNA"/>
</dbReference>
<dbReference type="EMBL" id="AC117988">
    <property type="protein sequence ID" value="AAP44707.1"/>
    <property type="molecule type" value="Genomic_DNA"/>
</dbReference>
<dbReference type="EMBL" id="DP000009">
    <property type="protein sequence ID" value="ABF98775.1"/>
    <property type="molecule type" value="Genomic_DNA"/>
</dbReference>
<dbReference type="EMBL" id="AP008209">
    <property type="protein sequence ID" value="BAF13126.1"/>
    <property type="molecule type" value="Genomic_DNA"/>
</dbReference>
<dbReference type="EMBL" id="AP014959">
    <property type="protein sequence ID" value="BAS86291.1"/>
    <property type="molecule type" value="Genomic_DNA"/>
</dbReference>
<dbReference type="EMBL" id="CM000140">
    <property type="protein sequence ID" value="EAZ28520.1"/>
    <property type="molecule type" value="Genomic_DNA"/>
</dbReference>
<dbReference type="EMBL" id="AK073529">
    <property type="protein sequence ID" value="BAG93501.1"/>
    <property type="molecule type" value="mRNA"/>
</dbReference>
<dbReference type="PIR" id="S23454">
    <property type="entry name" value="S23454"/>
</dbReference>
<dbReference type="RefSeq" id="XP_015629809.1">
    <property type="nucleotide sequence ID" value="XM_015774323.1"/>
</dbReference>
<dbReference type="SMR" id="P29250"/>
<dbReference type="FunCoup" id="P29250">
    <property type="interactions" value="419"/>
</dbReference>
<dbReference type="STRING" id="39947.P29250"/>
<dbReference type="PaxDb" id="39947-P29250"/>
<dbReference type="EnsemblPlants" id="Os03t0738600-01">
    <property type="protein sequence ID" value="Os03t0738600-01"/>
    <property type="gene ID" value="Os03g0738600"/>
</dbReference>
<dbReference type="Gramene" id="Os03t0738600-01">
    <property type="protein sequence ID" value="Os03t0738600-01"/>
    <property type="gene ID" value="Os03g0738600"/>
</dbReference>
<dbReference type="KEGG" id="dosa:Os03g0738600"/>
<dbReference type="eggNOG" id="ENOG502QQSP">
    <property type="taxonomic scope" value="Eukaryota"/>
</dbReference>
<dbReference type="HOGENOM" id="CLU_004282_0_0_1"/>
<dbReference type="InParanoid" id="P29250"/>
<dbReference type="OMA" id="DIKDASW"/>
<dbReference type="OrthoDB" id="407298at2759"/>
<dbReference type="BRENDA" id="1.13.11.58">
    <property type="organism ID" value="4460"/>
</dbReference>
<dbReference type="UniPathway" id="UPA00382"/>
<dbReference type="Proteomes" id="UP000000763">
    <property type="component" value="Chromosome 3"/>
</dbReference>
<dbReference type="Proteomes" id="UP000007752">
    <property type="component" value="Chromosome 3"/>
</dbReference>
<dbReference type="Proteomes" id="UP000059680">
    <property type="component" value="Chromosome 3"/>
</dbReference>
<dbReference type="GO" id="GO:0005737">
    <property type="term" value="C:cytoplasm"/>
    <property type="evidence" value="ECO:0000314"/>
    <property type="project" value="Gramene"/>
</dbReference>
<dbReference type="GO" id="GO:0016165">
    <property type="term" value="F:linoleate 13S-lipoxygenase activity"/>
    <property type="evidence" value="ECO:0000314"/>
    <property type="project" value="Gramene"/>
</dbReference>
<dbReference type="GO" id="GO:1990136">
    <property type="term" value="F:linoleate 9S-lipoxygenase activity"/>
    <property type="evidence" value="ECO:0007669"/>
    <property type="project" value="UniProtKB-EC"/>
</dbReference>
<dbReference type="GO" id="GO:0046872">
    <property type="term" value="F:metal ion binding"/>
    <property type="evidence" value="ECO:0007669"/>
    <property type="project" value="UniProtKB-KW"/>
</dbReference>
<dbReference type="GO" id="GO:0016702">
    <property type="term" value="F:oxidoreductase activity, acting on single donors with incorporation of molecular oxygen, incorporation of two atoms of oxygen"/>
    <property type="evidence" value="ECO:0000318"/>
    <property type="project" value="GO_Central"/>
</dbReference>
<dbReference type="GO" id="GO:0006633">
    <property type="term" value="P:fatty acid biosynthetic process"/>
    <property type="evidence" value="ECO:0007669"/>
    <property type="project" value="UniProtKB-KW"/>
</dbReference>
<dbReference type="GO" id="GO:0034440">
    <property type="term" value="P:lipid oxidation"/>
    <property type="evidence" value="ECO:0000318"/>
    <property type="project" value="GO_Central"/>
</dbReference>
<dbReference type="GO" id="GO:0031408">
    <property type="term" value="P:oxylipin biosynthetic process"/>
    <property type="evidence" value="ECO:0007669"/>
    <property type="project" value="UniProtKB-UniPathway"/>
</dbReference>
<dbReference type="GO" id="GO:0051707">
    <property type="term" value="P:response to other organism"/>
    <property type="evidence" value="ECO:0000314"/>
    <property type="project" value="Gramene"/>
</dbReference>
<dbReference type="GO" id="GO:0009611">
    <property type="term" value="P:response to wounding"/>
    <property type="evidence" value="ECO:0000314"/>
    <property type="project" value="Gramene"/>
</dbReference>
<dbReference type="CDD" id="cd01751">
    <property type="entry name" value="PLAT_LH2"/>
    <property type="match status" value="1"/>
</dbReference>
<dbReference type="FunFam" id="1.20.245.10:FF:000002">
    <property type="entry name" value="Lipoxygenase"/>
    <property type="match status" value="1"/>
</dbReference>
<dbReference type="FunFam" id="2.60.60.20:FF:000015">
    <property type="entry name" value="Lipoxygenase"/>
    <property type="match status" value="1"/>
</dbReference>
<dbReference type="FunFam" id="3.10.450.60:FF:000002">
    <property type="entry name" value="Lipoxygenase"/>
    <property type="match status" value="1"/>
</dbReference>
<dbReference type="FunFam" id="4.10.372.10:FF:000001">
    <property type="entry name" value="Lipoxygenase"/>
    <property type="match status" value="1"/>
</dbReference>
<dbReference type="FunFam" id="4.10.375.10:FF:000001">
    <property type="entry name" value="Lipoxygenase"/>
    <property type="match status" value="1"/>
</dbReference>
<dbReference type="Gene3D" id="3.10.450.60">
    <property type="match status" value="1"/>
</dbReference>
<dbReference type="Gene3D" id="4.10.375.10">
    <property type="entry name" value="Lipoxygenase-1, Domain 2"/>
    <property type="match status" value="1"/>
</dbReference>
<dbReference type="Gene3D" id="4.10.372.10">
    <property type="entry name" value="Lipoxygenase-1, Domain 3"/>
    <property type="match status" value="1"/>
</dbReference>
<dbReference type="Gene3D" id="1.20.245.10">
    <property type="entry name" value="Lipoxygenase-1, Domain 5"/>
    <property type="match status" value="1"/>
</dbReference>
<dbReference type="Gene3D" id="2.60.60.20">
    <property type="entry name" value="PLAT/LH2 domain"/>
    <property type="match status" value="1"/>
</dbReference>
<dbReference type="InterPro" id="IPR000907">
    <property type="entry name" value="LipOase"/>
</dbReference>
<dbReference type="InterPro" id="IPR013819">
    <property type="entry name" value="LipOase_C"/>
</dbReference>
<dbReference type="InterPro" id="IPR036226">
    <property type="entry name" value="LipOase_C_sf"/>
</dbReference>
<dbReference type="InterPro" id="IPR020834">
    <property type="entry name" value="LipOase_CS"/>
</dbReference>
<dbReference type="InterPro" id="IPR020833">
    <property type="entry name" value="LipOase_Fe_BS"/>
</dbReference>
<dbReference type="InterPro" id="IPR001246">
    <property type="entry name" value="LipOase_plant"/>
</dbReference>
<dbReference type="InterPro" id="IPR042057">
    <property type="entry name" value="Lipoxy_PLAT/LH2"/>
</dbReference>
<dbReference type="InterPro" id="IPR027433">
    <property type="entry name" value="Lipoxygenase_dom_3"/>
</dbReference>
<dbReference type="InterPro" id="IPR001024">
    <property type="entry name" value="PLAT/LH2_dom"/>
</dbReference>
<dbReference type="InterPro" id="IPR036392">
    <property type="entry name" value="PLAT/LH2_dom_sf"/>
</dbReference>
<dbReference type="PANTHER" id="PTHR11771">
    <property type="entry name" value="LIPOXYGENASE"/>
    <property type="match status" value="1"/>
</dbReference>
<dbReference type="Pfam" id="PF00305">
    <property type="entry name" value="Lipoxygenase"/>
    <property type="match status" value="1"/>
</dbReference>
<dbReference type="Pfam" id="PF01477">
    <property type="entry name" value="PLAT"/>
    <property type="match status" value="1"/>
</dbReference>
<dbReference type="PRINTS" id="PR00087">
    <property type="entry name" value="LIPOXYGENASE"/>
</dbReference>
<dbReference type="PRINTS" id="PR00468">
    <property type="entry name" value="PLTLPOXGNASE"/>
</dbReference>
<dbReference type="SMART" id="SM00308">
    <property type="entry name" value="LH2"/>
    <property type="match status" value="1"/>
</dbReference>
<dbReference type="SUPFAM" id="SSF49723">
    <property type="entry name" value="Lipase/lipooxygenase domain (PLAT/LH2 domain)"/>
    <property type="match status" value="1"/>
</dbReference>
<dbReference type="SUPFAM" id="SSF48484">
    <property type="entry name" value="Lipoxigenase"/>
    <property type="match status" value="1"/>
</dbReference>
<dbReference type="PROSITE" id="PS00711">
    <property type="entry name" value="LIPOXYGENASE_1"/>
    <property type="match status" value="1"/>
</dbReference>
<dbReference type="PROSITE" id="PS00081">
    <property type="entry name" value="LIPOXYGENASE_2"/>
    <property type="match status" value="1"/>
</dbReference>
<dbReference type="PROSITE" id="PS51393">
    <property type="entry name" value="LIPOXYGENASE_3"/>
    <property type="match status" value="1"/>
</dbReference>
<dbReference type="PROSITE" id="PS50095">
    <property type="entry name" value="PLAT"/>
    <property type="match status" value="1"/>
</dbReference>
<proteinExistence type="evidence at transcript level"/>
<sequence length="870" mass="97184">MLGGIIGGLTGNKNARLKGSLVLMRKNALDINDFGATVIDGISEFLGRGVTCQLVSSSLVDPNNGNRGRVGTEASLEQWLTSLPSLTTGESKFGVTFEWEVEKMGIPGAIIVKNNHAAEFFLKTITLDNVPGHGAVVFVANSWIYPASKYRYNRVFFSNDTSLPSKMPAALKPYRDDELRNLRGDDQQGPYQEHDRVYRYDVYNDLGEPDSGNPRPVLGGSPDRPYPRRGRTGRKPTKTDPTAESRLSLLENIYVPRDERFGHLKMADFLGYSIKALVDGIVPAIRTYVDLTPGEFDSFKDILKLYEGGLKLPSIPALEELRKRFPLQLVKDLIPAGGDYLLKLPMPHVIREDKKAWMTDDEFAREILAGVNPMVIARLTEFPPRSRLDPARYGDQTSTITAAHVERGLEGLTVQQAIDGNLLYVVDHHDHFMPYLLDINSLDDNFIYATRTLLFLRGDGTLAPLAIELSLPHLQDDGLITARSTVYTPAARGGTGAGAVEWWVWQLAKAYVNVNDYCWHQLISHWLNTHAVMEPFVIATNRQLSVAHPVHKLLLPHYRDTMTINALARQTLINGGGIFEMTVFPRKHALAMSSAFYKDWSFADQALPDDLVKRGVAVPDPASPYKVRLLIEDYPYANDGLAVWHAIEQWATEYLAIYYPNDGVLQGDAELQAWWKEVREVGHGDIKDATWWPEMKTVAELVKACATIIWIGSALHAAVNFGQYPYAGYLPNRPSVSRRPMPEPGTKEYDELARDPEKVFVRTITKQMQAIVGISLLEILSKHSSDEVYLGQRDTPEWTSDAKALEAFKRFGARLTEIESRVVAMNKDPHRKNRVGPTNFPYTLLYPNTSDLKGDAAGLSARGIPNSISI</sequence>
<evidence type="ECO:0000250" key="1"/>
<evidence type="ECO:0000255" key="2">
    <source>
        <dbReference type="PROSITE-ProRule" id="PRU00152"/>
    </source>
</evidence>
<evidence type="ECO:0000255" key="3">
    <source>
        <dbReference type="PROSITE-ProRule" id="PRU00726"/>
    </source>
</evidence>
<evidence type="ECO:0000256" key="4">
    <source>
        <dbReference type="SAM" id="MobiDB-lite"/>
    </source>
</evidence>
<evidence type="ECO:0000269" key="5">
    <source>
    </source>
</evidence>
<evidence type="ECO:0000305" key="6"/>
<evidence type="ECO:0000312" key="7">
    <source>
        <dbReference type="EMBL" id="EAZ28520.1"/>
    </source>
</evidence>
<reference key="1">
    <citation type="journal article" date="1992" name="Eur. J. Biochem.">
        <title>cDNA cloning of rice lipoxygenase L-2 and characterization using an active enzyme expressed from the cDNA in Escherichia coli.</title>
        <authorList>
            <person name="Ohta H."/>
            <person name="Shirano Y."/>
            <person name="Tanaka K."/>
            <person name="Morita Y."/>
            <person name="Shibata D."/>
        </authorList>
    </citation>
    <scope>NUCLEOTIDE SEQUENCE [MRNA]</scope>
    <scope>FUNCTION</scope>
    <source>
        <strain>cv. Nipponbare</strain>
        <tissue>Seedling</tissue>
    </source>
</reference>
<reference key="2">
    <citation type="journal article" date="2005" name="Genome Res.">
        <title>Sequence, annotation, and analysis of synteny between rice chromosome 3 and diverged grass species.</title>
        <authorList>
            <consortium name="The rice chromosome 3 sequencing consortium"/>
            <person name="Buell C.R."/>
            <person name="Yuan Q."/>
            <person name="Ouyang S."/>
            <person name="Liu J."/>
            <person name="Zhu W."/>
            <person name="Wang A."/>
            <person name="Maiti R."/>
            <person name="Haas B."/>
            <person name="Wortman J."/>
            <person name="Pertea M."/>
            <person name="Jones K.M."/>
            <person name="Kim M."/>
            <person name="Overton L."/>
            <person name="Tsitrin T."/>
            <person name="Fadrosh D."/>
            <person name="Bera J."/>
            <person name="Weaver B."/>
            <person name="Jin S."/>
            <person name="Johri S."/>
            <person name="Reardon M."/>
            <person name="Webb K."/>
            <person name="Hill J."/>
            <person name="Moffat K."/>
            <person name="Tallon L."/>
            <person name="Van Aken S."/>
            <person name="Lewis M."/>
            <person name="Utterback T."/>
            <person name="Feldblyum T."/>
            <person name="Zismann V."/>
            <person name="Iobst S."/>
            <person name="Hsiao J."/>
            <person name="de Vazeille A.R."/>
            <person name="Salzberg S.L."/>
            <person name="White O."/>
            <person name="Fraser C.M."/>
            <person name="Yu Y."/>
            <person name="Kim H."/>
            <person name="Rambo T."/>
            <person name="Currie J."/>
            <person name="Collura K."/>
            <person name="Kernodle-Thompson S."/>
            <person name="Wei F."/>
            <person name="Kudrna K."/>
            <person name="Ammiraju J.S.S."/>
            <person name="Luo M."/>
            <person name="Goicoechea J.L."/>
            <person name="Wing R.A."/>
            <person name="Henry D."/>
            <person name="Oates R."/>
            <person name="Palmer M."/>
            <person name="Pries G."/>
            <person name="Saski C."/>
            <person name="Simmons J."/>
            <person name="Soderlund C."/>
            <person name="Nelson W."/>
            <person name="de la Bastide M."/>
            <person name="Spiegel L."/>
            <person name="Nascimento L."/>
            <person name="Huang E."/>
            <person name="Preston R."/>
            <person name="Zutavern T."/>
            <person name="Palmer L."/>
            <person name="O'Shaughnessy A."/>
            <person name="Dike S."/>
            <person name="McCombie W.R."/>
            <person name="Minx P."/>
            <person name="Cordum H."/>
            <person name="Wilson R."/>
            <person name="Jin W."/>
            <person name="Lee H.R."/>
            <person name="Jiang J."/>
            <person name="Jackson S."/>
        </authorList>
    </citation>
    <scope>NUCLEOTIDE SEQUENCE [LARGE SCALE GENOMIC DNA]</scope>
    <source>
        <strain>cv. Nipponbare</strain>
    </source>
</reference>
<reference key="3">
    <citation type="journal article" date="2005" name="Nature">
        <title>The map-based sequence of the rice genome.</title>
        <authorList>
            <consortium name="International rice genome sequencing project (IRGSP)"/>
        </authorList>
    </citation>
    <scope>NUCLEOTIDE SEQUENCE [LARGE SCALE GENOMIC DNA]</scope>
    <source>
        <strain>cv. Nipponbare</strain>
    </source>
</reference>
<reference key="4">
    <citation type="journal article" date="2008" name="Nucleic Acids Res.">
        <title>The rice annotation project database (RAP-DB): 2008 update.</title>
        <authorList>
            <consortium name="The rice annotation project (RAP)"/>
        </authorList>
    </citation>
    <scope>GENOME REANNOTATION</scope>
    <source>
        <strain>cv. Nipponbare</strain>
    </source>
</reference>
<reference key="5">
    <citation type="journal article" date="2013" name="Rice">
        <title>Improvement of the Oryza sativa Nipponbare reference genome using next generation sequence and optical map data.</title>
        <authorList>
            <person name="Kawahara Y."/>
            <person name="de la Bastide M."/>
            <person name="Hamilton J.P."/>
            <person name="Kanamori H."/>
            <person name="McCombie W.R."/>
            <person name="Ouyang S."/>
            <person name="Schwartz D.C."/>
            <person name="Tanaka T."/>
            <person name="Wu J."/>
            <person name="Zhou S."/>
            <person name="Childs K.L."/>
            <person name="Davidson R.M."/>
            <person name="Lin H."/>
            <person name="Quesada-Ocampo L."/>
            <person name="Vaillancourt B."/>
            <person name="Sakai H."/>
            <person name="Lee S.S."/>
            <person name="Kim J."/>
            <person name="Numa H."/>
            <person name="Itoh T."/>
            <person name="Buell C.R."/>
            <person name="Matsumoto T."/>
        </authorList>
    </citation>
    <scope>GENOME REANNOTATION</scope>
    <source>
        <strain>cv. Nipponbare</strain>
    </source>
</reference>
<reference key="6">
    <citation type="journal article" date="2005" name="PLoS Biol.">
        <title>The genomes of Oryza sativa: a history of duplications.</title>
        <authorList>
            <person name="Yu J."/>
            <person name="Wang J."/>
            <person name="Lin W."/>
            <person name="Li S."/>
            <person name="Li H."/>
            <person name="Zhou J."/>
            <person name="Ni P."/>
            <person name="Dong W."/>
            <person name="Hu S."/>
            <person name="Zeng C."/>
            <person name="Zhang J."/>
            <person name="Zhang Y."/>
            <person name="Li R."/>
            <person name="Xu Z."/>
            <person name="Li S."/>
            <person name="Li X."/>
            <person name="Zheng H."/>
            <person name="Cong L."/>
            <person name="Lin L."/>
            <person name="Yin J."/>
            <person name="Geng J."/>
            <person name="Li G."/>
            <person name="Shi J."/>
            <person name="Liu J."/>
            <person name="Lv H."/>
            <person name="Li J."/>
            <person name="Wang J."/>
            <person name="Deng Y."/>
            <person name="Ran L."/>
            <person name="Shi X."/>
            <person name="Wang X."/>
            <person name="Wu Q."/>
            <person name="Li C."/>
            <person name="Ren X."/>
            <person name="Wang J."/>
            <person name="Wang X."/>
            <person name="Li D."/>
            <person name="Liu D."/>
            <person name="Zhang X."/>
            <person name="Ji Z."/>
            <person name="Zhao W."/>
            <person name="Sun Y."/>
            <person name="Zhang Z."/>
            <person name="Bao J."/>
            <person name="Han Y."/>
            <person name="Dong L."/>
            <person name="Ji J."/>
            <person name="Chen P."/>
            <person name="Wu S."/>
            <person name="Liu J."/>
            <person name="Xiao Y."/>
            <person name="Bu D."/>
            <person name="Tan J."/>
            <person name="Yang L."/>
            <person name="Ye C."/>
            <person name="Zhang J."/>
            <person name="Xu J."/>
            <person name="Zhou Y."/>
            <person name="Yu Y."/>
            <person name="Zhang B."/>
            <person name="Zhuang S."/>
            <person name="Wei H."/>
            <person name="Liu B."/>
            <person name="Lei M."/>
            <person name="Yu H."/>
            <person name="Li Y."/>
            <person name="Xu H."/>
            <person name="Wei S."/>
            <person name="He X."/>
            <person name="Fang L."/>
            <person name="Zhang Z."/>
            <person name="Zhang Y."/>
            <person name="Huang X."/>
            <person name="Su Z."/>
            <person name="Tong W."/>
            <person name="Li J."/>
            <person name="Tong Z."/>
            <person name="Li S."/>
            <person name="Ye J."/>
            <person name="Wang L."/>
            <person name="Fang L."/>
            <person name="Lei T."/>
            <person name="Chen C.-S."/>
            <person name="Chen H.-C."/>
            <person name="Xu Z."/>
            <person name="Li H."/>
            <person name="Huang H."/>
            <person name="Zhang F."/>
            <person name="Xu H."/>
            <person name="Li N."/>
            <person name="Zhao C."/>
            <person name="Li S."/>
            <person name="Dong L."/>
            <person name="Huang Y."/>
            <person name="Li L."/>
            <person name="Xi Y."/>
            <person name="Qi Q."/>
            <person name="Li W."/>
            <person name="Zhang B."/>
            <person name="Hu W."/>
            <person name="Zhang Y."/>
            <person name="Tian X."/>
            <person name="Jiao Y."/>
            <person name="Liang X."/>
            <person name="Jin J."/>
            <person name="Gao L."/>
            <person name="Zheng W."/>
            <person name="Hao B."/>
            <person name="Liu S.-M."/>
            <person name="Wang W."/>
            <person name="Yuan L."/>
            <person name="Cao M."/>
            <person name="McDermott J."/>
            <person name="Samudrala R."/>
            <person name="Wang J."/>
            <person name="Wong G.K.-S."/>
            <person name="Yang H."/>
        </authorList>
    </citation>
    <scope>NUCLEOTIDE SEQUENCE [LARGE SCALE GENOMIC DNA]</scope>
    <source>
        <strain>cv. Nipponbare</strain>
    </source>
</reference>
<reference key="7">
    <citation type="journal article" date="2003" name="Science">
        <title>Collection, mapping, and annotation of over 28,000 cDNA clones from japonica rice.</title>
        <authorList>
            <consortium name="The rice full-length cDNA consortium"/>
        </authorList>
    </citation>
    <scope>NUCLEOTIDE SEQUENCE [LARGE SCALE MRNA]</scope>
    <source>
        <strain>cv. Nipponbare</strain>
    </source>
</reference>
<comment type="function">
    <text evidence="5">Plant lipoxygenase may be involved in a number of diverse aspects of plant physiology including growth and development, pest resistance, and senescence or responses to wounding. Catalyzes the hydroperoxidation of lipids containing a cis,cis-1,4-pentadiene structure.</text>
</comment>
<comment type="catalytic activity">
    <reaction>
        <text>(9Z,12Z)-octadecadienoate + O2 = (9S)-hydroperoxy-(10E,12Z)-octadecadienoate</text>
        <dbReference type="Rhea" id="RHEA:30291"/>
        <dbReference type="ChEBI" id="CHEBI:15379"/>
        <dbReference type="ChEBI" id="CHEBI:30245"/>
        <dbReference type="ChEBI" id="CHEBI:60955"/>
        <dbReference type="EC" id="1.13.11.58"/>
    </reaction>
</comment>
<comment type="cofactor">
    <cofactor evidence="3">
        <name>Fe cation</name>
        <dbReference type="ChEBI" id="CHEBI:24875"/>
    </cofactor>
    <text evidence="3">Binds 1 Fe cation per subunit. Iron is tightly bound.</text>
</comment>
<comment type="pathway">
    <text evidence="3">Lipid metabolism; oxylipin biosynthesis.</text>
</comment>
<comment type="subunit">
    <text evidence="1">Monomer.</text>
</comment>
<comment type="subcellular location">
    <subcellularLocation>
        <location evidence="3">Cytoplasm</location>
    </subcellularLocation>
</comment>
<comment type="similarity">
    <text evidence="6">Belongs to the lipoxygenase family.</text>
</comment>
<feature type="chain" id="PRO_0000220708" description="Linoleate 9S-lipoxygenase 2">
    <location>
        <begin position="1"/>
        <end position="870"/>
    </location>
</feature>
<feature type="domain" description="PLAT" evidence="2">
    <location>
        <begin position="32"/>
        <end position="158"/>
    </location>
</feature>
<feature type="domain" description="Lipoxygenase" evidence="3">
    <location>
        <begin position="161"/>
        <end position="870"/>
    </location>
</feature>
<feature type="region of interest" description="Disordered" evidence="4">
    <location>
        <begin position="203"/>
        <end position="243"/>
    </location>
</feature>
<feature type="compositionally biased region" description="Basic residues" evidence="4">
    <location>
        <begin position="227"/>
        <end position="236"/>
    </location>
</feature>
<feature type="binding site" evidence="3">
    <location>
        <position position="525"/>
    </location>
    <ligand>
        <name>Fe cation</name>
        <dbReference type="ChEBI" id="CHEBI:24875"/>
        <note>catalytic</note>
    </ligand>
</feature>
<feature type="binding site" evidence="3">
    <location>
        <position position="530"/>
    </location>
    <ligand>
        <name>Fe cation</name>
        <dbReference type="ChEBI" id="CHEBI:24875"/>
        <note>catalytic</note>
    </ligand>
</feature>
<feature type="binding site" evidence="3">
    <location>
        <position position="716"/>
    </location>
    <ligand>
        <name>Fe cation</name>
        <dbReference type="ChEBI" id="CHEBI:24875"/>
        <note>catalytic</note>
    </ligand>
</feature>
<feature type="binding site" evidence="3">
    <location>
        <position position="720"/>
    </location>
    <ligand>
        <name>Fe cation</name>
        <dbReference type="ChEBI" id="CHEBI:24875"/>
        <note>catalytic</note>
    </ligand>
</feature>
<feature type="binding site" evidence="3">
    <location>
        <position position="870"/>
    </location>
    <ligand>
        <name>Fe cation</name>
        <dbReference type="ChEBI" id="CHEBI:24875"/>
        <note>catalytic</note>
    </ligand>
</feature>
<feature type="sequence conflict" description="In Ref. 1; CAA45738." evidence="6" ref="1">
    <original>DG</original>
    <variation>ER</variation>
    <location>
        <begin position="40"/>
        <end position="41"/>
    </location>
</feature>
<feature type="sequence conflict" description="In Ref. 1; CAA45738." evidence="6" ref="1">
    <original>P</original>
    <variation>A</variation>
    <location>
        <position position="168"/>
    </location>
</feature>
<feature type="sequence conflict" description="In Ref. 1; CAA45738." evidence="6" ref="1">
    <location>
        <position position="336"/>
    </location>
</feature>
<feature type="sequence conflict" description="In Ref. 1; CAA45738." evidence="6" ref="1">
    <original>RSR</original>
    <variation>EP</variation>
    <location>
        <begin position="385"/>
        <end position="387"/>
    </location>
</feature>
<feature type="sequence conflict" description="In Ref. 1; CAA45738." evidence="6" ref="1">
    <location>
        <position position="464"/>
    </location>
</feature>
<feature type="sequence conflict" description="In Ref. 1; CAA45738." evidence="6" ref="1">
    <original>RGGTGAGAV</original>
    <variation>AAAPAPAL</variation>
    <location>
        <begin position="492"/>
        <end position="500"/>
    </location>
</feature>
<feature type="sequence conflict" description="In Ref. 1; CAA45738." evidence="6" ref="1">
    <original>A</original>
    <variation>G</variation>
    <location>
        <position position="566"/>
    </location>
</feature>
<feature type="sequence conflict" description="In Ref. 1; CAA45738." evidence="6" ref="1">
    <original>KH</original>
    <variation>ND</variation>
    <location>
        <begin position="587"/>
        <end position="588"/>
    </location>
</feature>
<feature type="sequence conflict" description="In Ref. 1; CAA45738." evidence="6" ref="1">
    <original>AVP</original>
    <variation>RT</variation>
    <location>
        <begin position="617"/>
        <end position="619"/>
    </location>
</feature>
<feature type="sequence conflict" description="In Ref. 1; CAA45738." evidence="6" ref="1">
    <original>WHA</original>
    <variation>CTP</variation>
    <location>
        <begin position="644"/>
        <end position="646"/>
    </location>
</feature>
<feature type="sequence conflict" description="In Ref. 1; CAA45738." evidence="6" ref="1">
    <original>EL</original>
    <variation>DV</variation>
    <location>
        <begin position="700"/>
        <end position="701"/>
    </location>
</feature>
<feature type="sequence conflict" description="In Ref. 1; CAA45738." evidence="6" ref="1">
    <original>P</original>
    <variation>A</variation>
    <location>
        <position position="740"/>
    </location>
</feature>
<accession>P29250</accession>
<accession>Q10D65</accession>
<accession>Q7Y1F4</accession>